<protein>
    <recommendedName>
        <fullName evidence="1">Glycerol kinase</fullName>
        <ecNumber evidence="1">2.7.1.30</ecNumber>
    </recommendedName>
    <alternativeName>
        <fullName evidence="1">ATP:glycerol 3-phosphotransferase</fullName>
    </alternativeName>
    <alternativeName>
        <fullName evidence="1">Glycerokinase</fullName>
        <shortName evidence="1">GK</shortName>
    </alternativeName>
</protein>
<sequence>MQDQYILALDQGTTSSRAMLFDRLGNIVSTAQKEFQQIYPRPGWVEHDPQEIWSTQAGVAAEAVTRAGMNGTSIAAIGITNQRETTIVWDRETGHPIYNAIVWQDRRTADFCDQLKEQGLEEKVRAKTGLPIDSYFSATKIRWILDNVEGAREKARQGRLAFGTVDSWLVWNFTKGGLHVTDVTNASRTMLFNIHSLKWDDELLEALDIPRSMLPEVRASSEVYGPTKTTVFASKIPLAGIAGDQHAALFGQMCTESGMVKNTYGTGCFLVMNTGDKPIESKNNLVTTIAWQIGDQINYALEGSIFIGGAVVQWLRDGLGIIKNAAEIETLARSVSHSDGVYLVPAFAGLGAPHWNARARGTLFGVTRGTSSAHIARAALDSIAYQSLDVLKAMEADSGIRIGELRVDGGACANNLLMQFQADILGVDAVRPKVAETTALGAAYLAGLAVGYWKDVDELQSQWKLDRRFTPALPHAEVKQCLDGWQRAIRAAKAWADTP</sequence>
<accession>B2SYH7</accession>
<comment type="function">
    <text evidence="1">Key enzyme in the regulation of glycerol uptake and metabolism. Catalyzes the phosphorylation of glycerol to yield sn-glycerol 3-phosphate.</text>
</comment>
<comment type="catalytic activity">
    <reaction evidence="1">
        <text>glycerol + ATP = sn-glycerol 3-phosphate + ADP + H(+)</text>
        <dbReference type="Rhea" id="RHEA:21644"/>
        <dbReference type="ChEBI" id="CHEBI:15378"/>
        <dbReference type="ChEBI" id="CHEBI:17754"/>
        <dbReference type="ChEBI" id="CHEBI:30616"/>
        <dbReference type="ChEBI" id="CHEBI:57597"/>
        <dbReference type="ChEBI" id="CHEBI:456216"/>
        <dbReference type="EC" id="2.7.1.30"/>
    </reaction>
</comment>
<comment type="activity regulation">
    <text evidence="1">Inhibited by fructose 1,6-bisphosphate (FBP).</text>
</comment>
<comment type="pathway">
    <text evidence="1">Polyol metabolism; glycerol degradation via glycerol kinase pathway; sn-glycerol 3-phosphate from glycerol: step 1/1.</text>
</comment>
<comment type="similarity">
    <text evidence="1">Belongs to the FGGY kinase family.</text>
</comment>
<reference key="1">
    <citation type="journal article" date="2011" name="J. Bacteriol.">
        <title>Complete genome sequence of the plant growth-promoting endophyte Burkholderia phytofirmans strain PsJN.</title>
        <authorList>
            <person name="Weilharter A."/>
            <person name="Mitter B."/>
            <person name="Shin M.V."/>
            <person name="Chain P.S."/>
            <person name="Nowak J."/>
            <person name="Sessitsch A."/>
        </authorList>
    </citation>
    <scope>NUCLEOTIDE SEQUENCE [LARGE SCALE GENOMIC DNA]</scope>
    <source>
        <strain>DSM 17436 / LMG 22146 / PsJN</strain>
    </source>
</reference>
<feature type="chain" id="PRO_1000098723" description="Glycerol kinase">
    <location>
        <begin position="1"/>
        <end position="499"/>
    </location>
</feature>
<feature type="binding site" evidence="1">
    <location>
        <position position="13"/>
    </location>
    <ligand>
        <name>ADP</name>
        <dbReference type="ChEBI" id="CHEBI:456216"/>
    </ligand>
</feature>
<feature type="binding site" evidence="1">
    <location>
        <position position="13"/>
    </location>
    <ligand>
        <name>ATP</name>
        <dbReference type="ChEBI" id="CHEBI:30616"/>
    </ligand>
</feature>
<feature type="binding site" evidence="1">
    <location>
        <position position="13"/>
    </location>
    <ligand>
        <name>sn-glycerol 3-phosphate</name>
        <dbReference type="ChEBI" id="CHEBI:57597"/>
    </ligand>
</feature>
<feature type="binding site" evidence="1">
    <location>
        <position position="14"/>
    </location>
    <ligand>
        <name>ATP</name>
        <dbReference type="ChEBI" id="CHEBI:30616"/>
    </ligand>
</feature>
<feature type="binding site" evidence="1">
    <location>
        <position position="15"/>
    </location>
    <ligand>
        <name>ATP</name>
        <dbReference type="ChEBI" id="CHEBI:30616"/>
    </ligand>
</feature>
<feature type="binding site" evidence="1">
    <location>
        <position position="17"/>
    </location>
    <ligand>
        <name>ADP</name>
        <dbReference type="ChEBI" id="CHEBI:456216"/>
    </ligand>
</feature>
<feature type="binding site" evidence="1">
    <location>
        <position position="83"/>
    </location>
    <ligand>
        <name>glycerol</name>
        <dbReference type="ChEBI" id="CHEBI:17754"/>
    </ligand>
</feature>
<feature type="binding site" evidence="1">
    <location>
        <position position="83"/>
    </location>
    <ligand>
        <name>sn-glycerol 3-phosphate</name>
        <dbReference type="ChEBI" id="CHEBI:57597"/>
    </ligand>
</feature>
<feature type="binding site" evidence="1">
    <location>
        <position position="84"/>
    </location>
    <ligand>
        <name>glycerol</name>
        <dbReference type="ChEBI" id="CHEBI:17754"/>
    </ligand>
</feature>
<feature type="binding site" evidence="1">
    <location>
        <position position="84"/>
    </location>
    <ligand>
        <name>sn-glycerol 3-phosphate</name>
        <dbReference type="ChEBI" id="CHEBI:57597"/>
    </ligand>
</feature>
<feature type="binding site" evidence="1">
    <location>
        <position position="135"/>
    </location>
    <ligand>
        <name>glycerol</name>
        <dbReference type="ChEBI" id="CHEBI:17754"/>
    </ligand>
</feature>
<feature type="binding site" evidence="1">
    <location>
        <position position="135"/>
    </location>
    <ligand>
        <name>sn-glycerol 3-phosphate</name>
        <dbReference type="ChEBI" id="CHEBI:57597"/>
    </ligand>
</feature>
<feature type="binding site" evidence="1">
    <location>
        <position position="244"/>
    </location>
    <ligand>
        <name>glycerol</name>
        <dbReference type="ChEBI" id="CHEBI:17754"/>
    </ligand>
</feature>
<feature type="binding site" evidence="1">
    <location>
        <position position="244"/>
    </location>
    <ligand>
        <name>sn-glycerol 3-phosphate</name>
        <dbReference type="ChEBI" id="CHEBI:57597"/>
    </ligand>
</feature>
<feature type="binding site" evidence="1">
    <location>
        <position position="245"/>
    </location>
    <ligand>
        <name>glycerol</name>
        <dbReference type="ChEBI" id="CHEBI:17754"/>
    </ligand>
</feature>
<feature type="binding site" evidence="1">
    <location>
        <position position="266"/>
    </location>
    <ligand>
        <name>ADP</name>
        <dbReference type="ChEBI" id="CHEBI:456216"/>
    </ligand>
</feature>
<feature type="binding site" evidence="1">
    <location>
        <position position="266"/>
    </location>
    <ligand>
        <name>ATP</name>
        <dbReference type="ChEBI" id="CHEBI:30616"/>
    </ligand>
</feature>
<feature type="binding site" evidence="1">
    <location>
        <position position="309"/>
    </location>
    <ligand>
        <name>ADP</name>
        <dbReference type="ChEBI" id="CHEBI:456216"/>
    </ligand>
</feature>
<feature type="binding site" evidence="1">
    <location>
        <position position="309"/>
    </location>
    <ligand>
        <name>ATP</name>
        <dbReference type="ChEBI" id="CHEBI:30616"/>
    </ligand>
</feature>
<feature type="binding site" evidence="1">
    <location>
        <position position="313"/>
    </location>
    <ligand>
        <name>ATP</name>
        <dbReference type="ChEBI" id="CHEBI:30616"/>
    </ligand>
</feature>
<feature type="binding site" evidence="1">
    <location>
        <position position="410"/>
    </location>
    <ligand>
        <name>ADP</name>
        <dbReference type="ChEBI" id="CHEBI:456216"/>
    </ligand>
</feature>
<feature type="binding site" evidence="1">
    <location>
        <position position="410"/>
    </location>
    <ligand>
        <name>ATP</name>
        <dbReference type="ChEBI" id="CHEBI:30616"/>
    </ligand>
</feature>
<feature type="binding site" evidence="1">
    <location>
        <position position="414"/>
    </location>
    <ligand>
        <name>ADP</name>
        <dbReference type="ChEBI" id="CHEBI:456216"/>
    </ligand>
</feature>
<dbReference type="EC" id="2.7.1.30" evidence="1"/>
<dbReference type="EMBL" id="CP001052">
    <property type="protein sequence ID" value="ACD17712.1"/>
    <property type="molecule type" value="Genomic_DNA"/>
</dbReference>
<dbReference type="RefSeq" id="WP_012434280.1">
    <property type="nucleotide sequence ID" value="NC_010681.1"/>
</dbReference>
<dbReference type="SMR" id="B2SYH7"/>
<dbReference type="STRING" id="398527.Bphyt_3321"/>
<dbReference type="KEGG" id="bpy:Bphyt_3321"/>
<dbReference type="eggNOG" id="COG0554">
    <property type="taxonomic scope" value="Bacteria"/>
</dbReference>
<dbReference type="HOGENOM" id="CLU_009281_2_3_4"/>
<dbReference type="OrthoDB" id="9805576at2"/>
<dbReference type="UniPathway" id="UPA00618">
    <property type="reaction ID" value="UER00672"/>
</dbReference>
<dbReference type="Proteomes" id="UP000001739">
    <property type="component" value="Chromosome 1"/>
</dbReference>
<dbReference type="GO" id="GO:0005829">
    <property type="term" value="C:cytosol"/>
    <property type="evidence" value="ECO:0007669"/>
    <property type="project" value="TreeGrafter"/>
</dbReference>
<dbReference type="GO" id="GO:0005524">
    <property type="term" value="F:ATP binding"/>
    <property type="evidence" value="ECO:0007669"/>
    <property type="project" value="UniProtKB-UniRule"/>
</dbReference>
<dbReference type="GO" id="GO:0004370">
    <property type="term" value="F:glycerol kinase activity"/>
    <property type="evidence" value="ECO:0000250"/>
    <property type="project" value="UniProtKB"/>
</dbReference>
<dbReference type="GO" id="GO:0019563">
    <property type="term" value="P:glycerol catabolic process"/>
    <property type="evidence" value="ECO:0007669"/>
    <property type="project" value="UniProtKB-UniRule"/>
</dbReference>
<dbReference type="GO" id="GO:0006071">
    <property type="term" value="P:glycerol metabolic process"/>
    <property type="evidence" value="ECO:0000250"/>
    <property type="project" value="UniProtKB"/>
</dbReference>
<dbReference type="GO" id="GO:0006072">
    <property type="term" value="P:glycerol-3-phosphate metabolic process"/>
    <property type="evidence" value="ECO:0007669"/>
    <property type="project" value="InterPro"/>
</dbReference>
<dbReference type="CDD" id="cd07786">
    <property type="entry name" value="FGGY_EcGK_like"/>
    <property type="match status" value="1"/>
</dbReference>
<dbReference type="FunFam" id="3.30.420.40:FF:000007">
    <property type="entry name" value="Glycerol kinase"/>
    <property type="match status" value="1"/>
</dbReference>
<dbReference type="FunFam" id="3.30.420.40:FF:000008">
    <property type="entry name" value="Glycerol kinase"/>
    <property type="match status" value="1"/>
</dbReference>
<dbReference type="Gene3D" id="3.30.420.40">
    <property type="match status" value="2"/>
</dbReference>
<dbReference type="HAMAP" id="MF_00186">
    <property type="entry name" value="Glycerol_kin"/>
    <property type="match status" value="1"/>
</dbReference>
<dbReference type="InterPro" id="IPR043129">
    <property type="entry name" value="ATPase_NBD"/>
</dbReference>
<dbReference type="InterPro" id="IPR000577">
    <property type="entry name" value="Carb_kinase_FGGY"/>
</dbReference>
<dbReference type="InterPro" id="IPR018483">
    <property type="entry name" value="Carb_kinase_FGGY_CS"/>
</dbReference>
<dbReference type="InterPro" id="IPR018485">
    <property type="entry name" value="FGGY_C"/>
</dbReference>
<dbReference type="InterPro" id="IPR018484">
    <property type="entry name" value="FGGY_N"/>
</dbReference>
<dbReference type="InterPro" id="IPR005999">
    <property type="entry name" value="Glycerol_kin"/>
</dbReference>
<dbReference type="NCBIfam" id="TIGR01311">
    <property type="entry name" value="glycerol_kin"/>
    <property type="match status" value="1"/>
</dbReference>
<dbReference type="NCBIfam" id="NF000756">
    <property type="entry name" value="PRK00047.1"/>
    <property type="match status" value="1"/>
</dbReference>
<dbReference type="PANTHER" id="PTHR10196:SF69">
    <property type="entry name" value="GLYCEROL KINASE"/>
    <property type="match status" value="1"/>
</dbReference>
<dbReference type="PANTHER" id="PTHR10196">
    <property type="entry name" value="SUGAR KINASE"/>
    <property type="match status" value="1"/>
</dbReference>
<dbReference type="Pfam" id="PF02782">
    <property type="entry name" value="FGGY_C"/>
    <property type="match status" value="1"/>
</dbReference>
<dbReference type="Pfam" id="PF00370">
    <property type="entry name" value="FGGY_N"/>
    <property type="match status" value="1"/>
</dbReference>
<dbReference type="PIRSF" id="PIRSF000538">
    <property type="entry name" value="GlpK"/>
    <property type="match status" value="1"/>
</dbReference>
<dbReference type="SUPFAM" id="SSF53067">
    <property type="entry name" value="Actin-like ATPase domain"/>
    <property type="match status" value="2"/>
</dbReference>
<dbReference type="PROSITE" id="PS00933">
    <property type="entry name" value="FGGY_KINASES_1"/>
    <property type="match status" value="1"/>
</dbReference>
<dbReference type="PROSITE" id="PS00445">
    <property type="entry name" value="FGGY_KINASES_2"/>
    <property type="match status" value="1"/>
</dbReference>
<name>GLPK_PARPJ</name>
<evidence type="ECO:0000255" key="1">
    <source>
        <dbReference type="HAMAP-Rule" id="MF_00186"/>
    </source>
</evidence>
<gene>
    <name evidence="1" type="primary">glpK</name>
    <name type="ordered locus">Bphyt_3321</name>
</gene>
<proteinExistence type="inferred from homology"/>
<keyword id="KW-0067">ATP-binding</keyword>
<keyword id="KW-0319">Glycerol metabolism</keyword>
<keyword id="KW-0418">Kinase</keyword>
<keyword id="KW-0547">Nucleotide-binding</keyword>
<keyword id="KW-0808">Transferase</keyword>
<organism>
    <name type="scientific">Paraburkholderia phytofirmans (strain DSM 17436 / LMG 22146 / PsJN)</name>
    <name type="common">Burkholderia phytofirmans</name>
    <dbReference type="NCBI Taxonomy" id="398527"/>
    <lineage>
        <taxon>Bacteria</taxon>
        <taxon>Pseudomonadati</taxon>
        <taxon>Pseudomonadota</taxon>
        <taxon>Betaproteobacteria</taxon>
        <taxon>Burkholderiales</taxon>
        <taxon>Burkholderiaceae</taxon>
        <taxon>Paraburkholderia</taxon>
    </lineage>
</organism>